<keyword id="KW-0997">Cell inner membrane</keyword>
<keyword id="KW-1003">Cell membrane</keyword>
<keyword id="KW-0201">Cytochrome c-type biogenesis</keyword>
<keyword id="KW-0349">Heme</keyword>
<keyword id="KW-0408">Iron</keyword>
<keyword id="KW-0472">Membrane</keyword>
<keyword id="KW-0479">Metal-binding</keyword>
<keyword id="KW-1185">Reference proteome</keyword>
<keyword id="KW-0735">Signal-anchor</keyword>
<keyword id="KW-0812">Transmembrane</keyword>
<keyword id="KW-1133">Transmembrane helix</keyword>
<reference key="1">
    <citation type="journal article" date="2008" name="J. Bacteriol.">
        <title>The pangenome structure of Escherichia coli: comparative genomic analysis of E. coli commensal and pathogenic isolates.</title>
        <authorList>
            <person name="Rasko D.A."/>
            <person name="Rosovitz M.J."/>
            <person name="Myers G.S.A."/>
            <person name="Mongodin E.F."/>
            <person name="Fricke W.F."/>
            <person name="Gajer P."/>
            <person name="Crabtree J."/>
            <person name="Sebaihia M."/>
            <person name="Thomson N.R."/>
            <person name="Chaudhuri R."/>
            <person name="Henderson I.R."/>
            <person name="Sperandio V."/>
            <person name="Ravel J."/>
        </authorList>
    </citation>
    <scope>NUCLEOTIDE SEQUENCE [LARGE SCALE GENOMIC DNA]</scope>
    <source>
        <strain>E24377A / ETEC</strain>
    </source>
</reference>
<sequence>MNIRRKNRLWIACAVLAGLALTIGLVLYALRSNIDLFYTPGEILYGKRETQQMPEVGQRLRVGGMVMPGSVQRDPNSLKVTFTIYDAEGSVDVSYEGILPDLFREGQGVVVQGELEKGNHILAKEVLAKHDENYTPPEVEKAMEANHRRPASVYKDPAS</sequence>
<organism>
    <name type="scientific">Escherichia coli O139:H28 (strain E24377A / ETEC)</name>
    <dbReference type="NCBI Taxonomy" id="331111"/>
    <lineage>
        <taxon>Bacteria</taxon>
        <taxon>Pseudomonadati</taxon>
        <taxon>Pseudomonadota</taxon>
        <taxon>Gammaproteobacteria</taxon>
        <taxon>Enterobacterales</taxon>
        <taxon>Enterobacteriaceae</taxon>
        <taxon>Escherichia</taxon>
    </lineage>
</organism>
<name>CCME_ECO24</name>
<gene>
    <name evidence="1" type="primary">ccmE</name>
    <name evidence="1" type="synonym">cycJ</name>
    <name type="ordered locus">EcE24377A_2496</name>
</gene>
<accession>A7ZP19</accession>
<dbReference type="EMBL" id="CP000800">
    <property type="protein sequence ID" value="ABV19884.1"/>
    <property type="molecule type" value="Genomic_DNA"/>
</dbReference>
<dbReference type="RefSeq" id="WP_001026418.1">
    <property type="nucleotide sequence ID" value="NC_009801.1"/>
</dbReference>
<dbReference type="BMRB" id="A7ZP19"/>
<dbReference type="SMR" id="A7ZP19"/>
<dbReference type="GeneID" id="86860369"/>
<dbReference type="KEGG" id="ecw:EcE24377A_2496"/>
<dbReference type="HOGENOM" id="CLU_079503_1_0_6"/>
<dbReference type="Proteomes" id="UP000001122">
    <property type="component" value="Chromosome"/>
</dbReference>
<dbReference type="GO" id="GO:0005886">
    <property type="term" value="C:plasma membrane"/>
    <property type="evidence" value="ECO:0007669"/>
    <property type="project" value="UniProtKB-SubCell"/>
</dbReference>
<dbReference type="GO" id="GO:0020037">
    <property type="term" value="F:heme binding"/>
    <property type="evidence" value="ECO:0007669"/>
    <property type="project" value="InterPro"/>
</dbReference>
<dbReference type="GO" id="GO:0046872">
    <property type="term" value="F:metal ion binding"/>
    <property type="evidence" value="ECO:0007669"/>
    <property type="project" value="UniProtKB-KW"/>
</dbReference>
<dbReference type="GO" id="GO:0017004">
    <property type="term" value="P:cytochrome complex assembly"/>
    <property type="evidence" value="ECO:0007669"/>
    <property type="project" value="UniProtKB-KW"/>
</dbReference>
<dbReference type="FunFam" id="2.40.50.140:FF:000104">
    <property type="entry name" value="Cytochrome c-type biogenesis protein CcmE"/>
    <property type="match status" value="1"/>
</dbReference>
<dbReference type="Gene3D" id="2.40.50.140">
    <property type="entry name" value="Nucleic acid-binding proteins"/>
    <property type="match status" value="1"/>
</dbReference>
<dbReference type="HAMAP" id="MF_01959">
    <property type="entry name" value="CcmE"/>
    <property type="match status" value="1"/>
</dbReference>
<dbReference type="InterPro" id="IPR004329">
    <property type="entry name" value="CcmE"/>
</dbReference>
<dbReference type="InterPro" id="IPR036127">
    <property type="entry name" value="CcmE-like_sf"/>
</dbReference>
<dbReference type="InterPro" id="IPR012340">
    <property type="entry name" value="NA-bd_OB-fold"/>
</dbReference>
<dbReference type="NCBIfam" id="NF009635">
    <property type="entry name" value="PRK13150.1"/>
    <property type="match status" value="1"/>
</dbReference>
<dbReference type="NCBIfam" id="NF009638">
    <property type="entry name" value="PRK13165.1"/>
    <property type="match status" value="1"/>
</dbReference>
<dbReference type="NCBIfam" id="NF009727">
    <property type="entry name" value="PRK13254.1-1"/>
    <property type="match status" value="1"/>
</dbReference>
<dbReference type="NCBIfam" id="NF009729">
    <property type="entry name" value="PRK13254.1-3"/>
    <property type="match status" value="1"/>
</dbReference>
<dbReference type="PANTHER" id="PTHR34128">
    <property type="entry name" value="CYTOCHROME C-TYPE BIOGENESIS PROTEIN CCME HOMOLOG, MITOCHONDRIAL"/>
    <property type="match status" value="1"/>
</dbReference>
<dbReference type="PANTHER" id="PTHR34128:SF2">
    <property type="entry name" value="CYTOCHROME C-TYPE BIOGENESIS PROTEIN CCME HOMOLOG, MITOCHONDRIAL"/>
    <property type="match status" value="1"/>
</dbReference>
<dbReference type="Pfam" id="PF03100">
    <property type="entry name" value="CcmE"/>
    <property type="match status" value="1"/>
</dbReference>
<dbReference type="SUPFAM" id="SSF82093">
    <property type="entry name" value="Heme chaperone CcmE"/>
    <property type="match status" value="1"/>
</dbReference>
<protein>
    <recommendedName>
        <fullName evidence="1">Cytochrome c-type biogenesis protein CcmE</fullName>
    </recommendedName>
    <alternativeName>
        <fullName evidence="1">Cytochrome c maturation protein E</fullName>
    </alternativeName>
    <alternativeName>
        <fullName evidence="1">Heme chaperone CcmE</fullName>
    </alternativeName>
</protein>
<evidence type="ECO:0000255" key="1">
    <source>
        <dbReference type="HAMAP-Rule" id="MF_01959"/>
    </source>
</evidence>
<evidence type="ECO:0000256" key="2">
    <source>
        <dbReference type="SAM" id="MobiDB-lite"/>
    </source>
</evidence>
<comment type="function">
    <text evidence="1">Heme chaperone required for the biogenesis of c-type cytochromes. Transiently binds heme delivered by CcmC and transfers the heme to apo-cytochromes in a process facilitated by CcmF and CcmH.</text>
</comment>
<comment type="subcellular location">
    <subcellularLocation>
        <location evidence="1">Cell inner membrane</location>
        <topology evidence="1">Single-pass type II membrane protein</topology>
        <orientation evidence="1">Periplasmic side</orientation>
    </subcellularLocation>
</comment>
<comment type="similarity">
    <text evidence="1">Belongs to the CcmE/CycJ family.</text>
</comment>
<feature type="chain" id="PRO_1000070809" description="Cytochrome c-type biogenesis protein CcmE">
    <location>
        <begin position="1"/>
        <end position="159"/>
    </location>
</feature>
<feature type="topological domain" description="Cytoplasmic" evidence="1">
    <location>
        <begin position="1"/>
        <end position="8"/>
    </location>
</feature>
<feature type="transmembrane region" description="Helical; Signal-anchor for type II membrane protein" evidence="1">
    <location>
        <begin position="9"/>
        <end position="29"/>
    </location>
</feature>
<feature type="topological domain" description="Periplasmic" evidence="1">
    <location>
        <begin position="30"/>
        <end position="159"/>
    </location>
</feature>
<feature type="region of interest" description="Disordered" evidence="2">
    <location>
        <begin position="132"/>
        <end position="159"/>
    </location>
</feature>
<feature type="compositionally biased region" description="Basic and acidic residues" evidence="2">
    <location>
        <begin position="132"/>
        <end position="147"/>
    </location>
</feature>
<feature type="binding site" description="covalent" evidence="1">
    <location>
        <position position="130"/>
    </location>
    <ligand>
        <name>heme</name>
        <dbReference type="ChEBI" id="CHEBI:30413"/>
    </ligand>
</feature>
<feature type="binding site" description="axial binding residue" evidence="1">
    <location>
        <position position="134"/>
    </location>
    <ligand>
        <name>heme</name>
        <dbReference type="ChEBI" id="CHEBI:30413"/>
    </ligand>
    <ligandPart>
        <name>Fe</name>
        <dbReference type="ChEBI" id="CHEBI:18248"/>
    </ligandPart>
</feature>
<proteinExistence type="inferred from homology"/>